<dbReference type="EC" id="3.6.5.n1" evidence="1"/>
<dbReference type="EMBL" id="CP000237">
    <property type="protein sequence ID" value="ABD45866.1"/>
    <property type="molecule type" value="Genomic_DNA"/>
</dbReference>
<dbReference type="RefSeq" id="WP_011452152.1">
    <property type="nucleotide sequence ID" value="NC_007798.1"/>
</dbReference>
<dbReference type="SMR" id="Q2GD00"/>
<dbReference type="STRING" id="222891.NSE_0771"/>
<dbReference type="KEGG" id="nse:NSE_0771"/>
<dbReference type="eggNOG" id="COG0481">
    <property type="taxonomic scope" value="Bacteria"/>
</dbReference>
<dbReference type="HOGENOM" id="CLU_009995_3_3_5"/>
<dbReference type="OrthoDB" id="9802948at2"/>
<dbReference type="Proteomes" id="UP000001942">
    <property type="component" value="Chromosome"/>
</dbReference>
<dbReference type="GO" id="GO:0005886">
    <property type="term" value="C:plasma membrane"/>
    <property type="evidence" value="ECO:0007669"/>
    <property type="project" value="UniProtKB-SubCell"/>
</dbReference>
<dbReference type="GO" id="GO:0005525">
    <property type="term" value="F:GTP binding"/>
    <property type="evidence" value="ECO:0007669"/>
    <property type="project" value="UniProtKB-UniRule"/>
</dbReference>
<dbReference type="GO" id="GO:0003924">
    <property type="term" value="F:GTPase activity"/>
    <property type="evidence" value="ECO:0007669"/>
    <property type="project" value="UniProtKB-UniRule"/>
</dbReference>
<dbReference type="GO" id="GO:0097216">
    <property type="term" value="F:guanosine tetraphosphate binding"/>
    <property type="evidence" value="ECO:0007669"/>
    <property type="project" value="UniProtKB-ARBA"/>
</dbReference>
<dbReference type="GO" id="GO:0043022">
    <property type="term" value="F:ribosome binding"/>
    <property type="evidence" value="ECO:0007669"/>
    <property type="project" value="UniProtKB-UniRule"/>
</dbReference>
<dbReference type="GO" id="GO:0003746">
    <property type="term" value="F:translation elongation factor activity"/>
    <property type="evidence" value="ECO:0007669"/>
    <property type="project" value="UniProtKB-UniRule"/>
</dbReference>
<dbReference type="GO" id="GO:0045727">
    <property type="term" value="P:positive regulation of translation"/>
    <property type="evidence" value="ECO:0007669"/>
    <property type="project" value="UniProtKB-UniRule"/>
</dbReference>
<dbReference type="CDD" id="cd03699">
    <property type="entry name" value="EF4_II"/>
    <property type="match status" value="1"/>
</dbReference>
<dbReference type="CDD" id="cd01890">
    <property type="entry name" value="LepA"/>
    <property type="match status" value="1"/>
</dbReference>
<dbReference type="CDD" id="cd03709">
    <property type="entry name" value="lepA_C"/>
    <property type="match status" value="1"/>
</dbReference>
<dbReference type="FunFam" id="3.40.50.300:FF:000078">
    <property type="entry name" value="Elongation factor 4"/>
    <property type="match status" value="1"/>
</dbReference>
<dbReference type="FunFam" id="2.40.30.10:FF:000015">
    <property type="entry name" value="Translation factor GUF1, mitochondrial"/>
    <property type="match status" value="1"/>
</dbReference>
<dbReference type="FunFam" id="3.30.70.240:FF:000007">
    <property type="entry name" value="Translation factor GUF1, mitochondrial"/>
    <property type="match status" value="1"/>
</dbReference>
<dbReference type="FunFam" id="3.30.70.2570:FF:000001">
    <property type="entry name" value="Translation factor GUF1, mitochondrial"/>
    <property type="match status" value="1"/>
</dbReference>
<dbReference type="FunFam" id="3.30.70.870:FF:000004">
    <property type="entry name" value="Translation factor GUF1, mitochondrial"/>
    <property type="match status" value="1"/>
</dbReference>
<dbReference type="Gene3D" id="3.30.70.240">
    <property type="match status" value="1"/>
</dbReference>
<dbReference type="Gene3D" id="3.30.70.2570">
    <property type="entry name" value="Elongation factor 4, C-terminal domain"/>
    <property type="match status" value="1"/>
</dbReference>
<dbReference type="Gene3D" id="3.30.70.870">
    <property type="entry name" value="Elongation Factor G (Translational Gtpase), domain 3"/>
    <property type="match status" value="1"/>
</dbReference>
<dbReference type="Gene3D" id="3.40.50.300">
    <property type="entry name" value="P-loop containing nucleotide triphosphate hydrolases"/>
    <property type="match status" value="1"/>
</dbReference>
<dbReference type="Gene3D" id="2.40.30.10">
    <property type="entry name" value="Translation factors"/>
    <property type="match status" value="1"/>
</dbReference>
<dbReference type="HAMAP" id="MF_00071">
    <property type="entry name" value="LepA"/>
    <property type="match status" value="1"/>
</dbReference>
<dbReference type="InterPro" id="IPR006297">
    <property type="entry name" value="EF-4"/>
</dbReference>
<dbReference type="InterPro" id="IPR041095">
    <property type="entry name" value="EFG_II"/>
</dbReference>
<dbReference type="InterPro" id="IPR035647">
    <property type="entry name" value="EFG_III/V"/>
</dbReference>
<dbReference type="InterPro" id="IPR000640">
    <property type="entry name" value="EFG_V-like"/>
</dbReference>
<dbReference type="InterPro" id="IPR004161">
    <property type="entry name" value="EFTu-like_2"/>
</dbReference>
<dbReference type="InterPro" id="IPR031157">
    <property type="entry name" value="G_TR_CS"/>
</dbReference>
<dbReference type="InterPro" id="IPR038363">
    <property type="entry name" value="LepA_C_sf"/>
</dbReference>
<dbReference type="InterPro" id="IPR013842">
    <property type="entry name" value="LepA_CTD"/>
</dbReference>
<dbReference type="InterPro" id="IPR035654">
    <property type="entry name" value="LepA_IV"/>
</dbReference>
<dbReference type="InterPro" id="IPR027417">
    <property type="entry name" value="P-loop_NTPase"/>
</dbReference>
<dbReference type="InterPro" id="IPR005225">
    <property type="entry name" value="Small_GTP-bd"/>
</dbReference>
<dbReference type="InterPro" id="IPR000795">
    <property type="entry name" value="T_Tr_GTP-bd_dom"/>
</dbReference>
<dbReference type="InterPro" id="IPR009000">
    <property type="entry name" value="Transl_B-barrel_sf"/>
</dbReference>
<dbReference type="NCBIfam" id="TIGR01393">
    <property type="entry name" value="lepA"/>
    <property type="match status" value="1"/>
</dbReference>
<dbReference type="NCBIfam" id="TIGR00231">
    <property type="entry name" value="small_GTP"/>
    <property type="match status" value="1"/>
</dbReference>
<dbReference type="PANTHER" id="PTHR43512:SF4">
    <property type="entry name" value="TRANSLATION FACTOR GUF1 HOMOLOG, CHLOROPLASTIC"/>
    <property type="match status" value="1"/>
</dbReference>
<dbReference type="PANTHER" id="PTHR43512">
    <property type="entry name" value="TRANSLATION FACTOR GUF1-RELATED"/>
    <property type="match status" value="1"/>
</dbReference>
<dbReference type="Pfam" id="PF00679">
    <property type="entry name" value="EFG_C"/>
    <property type="match status" value="1"/>
</dbReference>
<dbReference type="Pfam" id="PF14492">
    <property type="entry name" value="EFG_III"/>
    <property type="match status" value="1"/>
</dbReference>
<dbReference type="Pfam" id="PF00009">
    <property type="entry name" value="GTP_EFTU"/>
    <property type="match status" value="1"/>
</dbReference>
<dbReference type="Pfam" id="PF03144">
    <property type="entry name" value="GTP_EFTU_D2"/>
    <property type="match status" value="1"/>
</dbReference>
<dbReference type="Pfam" id="PF06421">
    <property type="entry name" value="LepA_C"/>
    <property type="match status" value="1"/>
</dbReference>
<dbReference type="PRINTS" id="PR00315">
    <property type="entry name" value="ELONGATNFCT"/>
</dbReference>
<dbReference type="SUPFAM" id="SSF54980">
    <property type="entry name" value="EF-G C-terminal domain-like"/>
    <property type="match status" value="2"/>
</dbReference>
<dbReference type="SUPFAM" id="SSF52540">
    <property type="entry name" value="P-loop containing nucleoside triphosphate hydrolases"/>
    <property type="match status" value="1"/>
</dbReference>
<dbReference type="SUPFAM" id="SSF50447">
    <property type="entry name" value="Translation proteins"/>
    <property type="match status" value="1"/>
</dbReference>
<dbReference type="PROSITE" id="PS00301">
    <property type="entry name" value="G_TR_1"/>
    <property type="match status" value="1"/>
</dbReference>
<dbReference type="PROSITE" id="PS51722">
    <property type="entry name" value="G_TR_2"/>
    <property type="match status" value="1"/>
</dbReference>
<protein>
    <recommendedName>
        <fullName evidence="1">Elongation factor 4</fullName>
        <shortName evidence="1">EF-4</shortName>
        <ecNumber evidence="1">3.6.5.n1</ecNumber>
    </recommendedName>
    <alternativeName>
        <fullName evidence="1">Ribosomal back-translocase LepA</fullName>
    </alternativeName>
</protein>
<organism>
    <name type="scientific">Neorickettsia sennetsu (strain ATCC VR-367 / Miyayama)</name>
    <name type="common">Ehrlichia sennetsu</name>
    <dbReference type="NCBI Taxonomy" id="222891"/>
    <lineage>
        <taxon>Bacteria</taxon>
        <taxon>Pseudomonadati</taxon>
        <taxon>Pseudomonadota</taxon>
        <taxon>Alphaproteobacteria</taxon>
        <taxon>Rickettsiales</taxon>
        <taxon>Anaplasmataceae</taxon>
        <taxon>Neorickettsia</taxon>
    </lineage>
</organism>
<reference key="1">
    <citation type="journal article" date="2006" name="PLoS Genet.">
        <title>Comparative genomics of emerging human ehrlichiosis agents.</title>
        <authorList>
            <person name="Dunning Hotopp J.C."/>
            <person name="Lin M."/>
            <person name="Madupu R."/>
            <person name="Crabtree J."/>
            <person name="Angiuoli S.V."/>
            <person name="Eisen J.A."/>
            <person name="Seshadri R."/>
            <person name="Ren Q."/>
            <person name="Wu M."/>
            <person name="Utterback T.R."/>
            <person name="Smith S."/>
            <person name="Lewis M."/>
            <person name="Khouri H."/>
            <person name="Zhang C."/>
            <person name="Niu H."/>
            <person name="Lin Q."/>
            <person name="Ohashi N."/>
            <person name="Zhi N."/>
            <person name="Nelson W.C."/>
            <person name="Brinkac L.M."/>
            <person name="Dodson R.J."/>
            <person name="Rosovitz M.J."/>
            <person name="Sundaram J.P."/>
            <person name="Daugherty S.C."/>
            <person name="Davidsen T."/>
            <person name="Durkin A.S."/>
            <person name="Gwinn M.L."/>
            <person name="Haft D.H."/>
            <person name="Selengut J.D."/>
            <person name="Sullivan S.A."/>
            <person name="Zafar N."/>
            <person name="Zhou L."/>
            <person name="Benahmed F."/>
            <person name="Forberger H."/>
            <person name="Halpin R."/>
            <person name="Mulligan S."/>
            <person name="Robinson J."/>
            <person name="White O."/>
            <person name="Rikihisa Y."/>
            <person name="Tettelin H."/>
        </authorList>
    </citation>
    <scope>NUCLEOTIDE SEQUENCE [LARGE SCALE GENOMIC DNA]</scope>
    <source>
        <strain>ATCC VR-367 / Miyayama</strain>
    </source>
</reference>
<feature type="chain" id="PRO_0000265679" description="Elongation factor 4">
    <location>
        <begin position="1"/>
        <end position="596"/>
    </location>
</feature>
<feature type="domain" description="tr-type G">
    <location>
        <begin position="2"/>
        <end position="184"/>
    </location>
</feature>
<feature type="binding site" evidence="1">
    <location>
        <begin position="14"/>
        <end position="19"/>
    </location>
    <ligand>
        <name>GTP</name>
        <dbReference type="ChEBI" id="CHEBI:37565"/>
    </ligand>
</feature>
<feature type="binding site" evidence="1">
    <location>
        <begin position="131"/>
        <end position="134"/>
    </location>
    <ligand>
        <name>GTP</name>
        <dbReference type="ChEBI" id="CHEBI:37565"/>
    </ligand>
</feature>
<evidence type="ECO:0000255" key="1">
    <source>
        <dbReference type="HAMAP-Rule" id="MF_00071"/>
    </source>
</evidence>
<name>LEPA_NEOSM</name>
<comment type="function">
    <text evidence="1">Required for accurate and efficient protein synthesis under certain stress conditions. May act as a fidelity factor of the translation reaction, by catalyzing a one-codon backward translocation of tRNAs on improperly translocated ribosomes. Back-translocation proceeds from a post-translocation (POST) complex to a pre-translocation (PRE) complex, thus giving elongation factor G a second chance to translocate the tRNAs correctly. Binds to ribosomes in a GTP-dependent manner.</text>
</comment>
<comment type="catalytic activity">
    <reaction evidence="1">
        <text>GTP + H2O = GDP + phosphate + H(+)</text>
        <dbReference type="Rhea" id="RHEA:19669"/>
        <dbReference type="ChEBI" id="CHEBI:15377"/>
        <dbReference type="ChEBI" id="CHEBI:15378"/>
        <dbReference type="ChEBI" id="CHEBI:37565"/>
        <dbReference type="ChEBI" id="CHEBI:43474"/>
        <dbReference type="ChEBI" id="CHEBI:58189"/>
        <dbReference type="EC" id="3.6.5.n1"/>
    </reaction>
</comment>
<comment type="subcellular location">
    <subcellularLocation>
        <location evidence="1">Cell inner membrane</location>
        <topology evidence="1">Peripheral membrane protein</topology>
        <orientation evidence="1">Cytoplasmic side</orientation>
    </subcellularLocation>
</comment>
<comment type="similarity">
    <text evidence="1">Belongs to the TRAFAC class translation factor GTPase superfamily. Classic translation factor GTPase family. LepA subfamily.</text>
</comment>
<gene>
    <name evidence="1" type="primary">lepA</name>
    <name type="ordered locus">NSE_0771</name>
</gene>
<accession>Q2GD00</accession>
<proteinExistence type="inferred from homology"/>
<keyword id="KW-0997">Cell inner membrane</keyword>
<keyword id="KW-1003">Cell membrane</keyword>
<keyword id="KW-0342">GTP-binding</keyword>
<keyword id="KW-0378">Hydrolase</keyword>
<keyword id="KW-0472">Membrane</keyword>
<keyword id="KW-0547">Nucleotide-binding</keyword>
<keyword id="KW-0648">Protein biosynthesis</keyword>
<sequence>MKNIRNFAIIAHIDHGKSTLADRLMEECKAVDPRKMKEQLLDSMKIERERGITIKSQTVMLKYTAKDNEDYVLNLIDTPGHVDFSYEVSRSLAACEGSLLIVDATQGLEAQTLANVYKAIDNDHAIIPVINKIDLDSAEPERVRAQIRDVIGISTENAVEVSAKLGTGIADLLESIVKYIPPPEGDVSERLQALLIDSWYDIYLGVVILVRVKNGSIKSGMTIEMMSNGNKYCVEKVGIFTPEKRNVTELRAGEIGFLTASIKNARDCNVGDTITDAKNPCTEHLPGFKQLRPVVFCSLFPVSSDEFEKLRQSLEKLHLNDSSFTFESESSSALGHGFRCGFLGMLHLEVITQRLDEEFDLALVLTAPSVVYRIHMKDSSVLELYNPTEMPDPSKIDHIEEPWIKASVMLPGDYIGEVINLCNEKRGEQIDLVYVDNKAILTYGLPLSEIVFDFYDKLKSVSKGYASLDWEIHGYRSSELVKLSIVINGEEVDALSVMIYRPNAEKRGREICERLKELIPRQQYKIAIQAAIGGKVIARETVNPYRKDVTAKLYGGDRTRRMKLLEKQKKGKKRMHSIGKVNIPQSAFMEALKVKP</sequence>